<organism>
    <name type="scientific">Yersinia pseudotuberculosis serotype O:3 (strain YPIII)</name>
    <dbReference type="NCBI Taxonomy" id="502800"/>
    <lineage>
        <taxon>Bacteria</taxon>
        <taxon>Pseudomonadati</taxon>
        <taxon>Pseudomonadota</taxon>
        <taxon>Gammaproteobacteria</taxon>
        <taxon>Enterobacterales</taxon>
        <taxon>Yersiniaceae</taxon>
        <taxon>Yersinia</taxon>
    </lineage>
</organism>
<reference key="1">
    <citation type="submission" date="2008-02" db="EMBL/GenBank/DDBJ databases">
        <title>Complete sequence of Yersinia pseudotuberculosis YPIII.</title>
        <authorList>
            <consortium name="US DOE Joint Genome Institute"/>
            <person name="Copeland A."/>
            <person name="Lucas S."/>
            <person name="Lapidus A."/>
            <person name="Glavina del Rio T."/>
            <person name="Dalin E."/>
            <person name="Tice H."/>
            <person name="Bruce D."/>
            <person name="Goodwin L."/>
            <person name="Pitluck S."/>
            <person name="Munk A.C."/>
            <person name="Brettin T."/>
            <person name="Detter J.C."/>
            <person name="Han C."/>
            <person name="Tapia R."/>
            <person name="Schmutz J."/>
            <person name="Larimer F."/>
            <person name="Land M."/>
            <person name="Hauser L."/>
            <person name="Challacombe J.F."/>
            <person name="Green L."/>
            <person name="Lindler L.E."/>
            <person name="Nikolich M.P."/>
            <person name="Richardson P."/>
        </authorList>
    </citation>
    <scope>NUCLEOTIDE SEQUENCE [LARGE SCALE GENOMIC DNA]</scope>
    <source>
        <strain>YPIII</strain>
    </source>
</reference>
<gene>
    <name evidence="1" type="primary">acpP</name>
    <name type="ordered locus">YPK_1687</name>
</gene>
<dbReference type="EMBL" id="CP000950">
    <property type="protein sequence ID" value="ACA67980.1"/>
    <property type="molecule type" value="Genomic_DNA"/>
</dbReference>
<dbReference type="RefSeq" id="WP_002220787.1">
    <property type="nucleotide sequence ID" value="NZ_CP009792.1"/>
</dbReference>
<dbReference type="SMR" id="B1JI34"/>
<dbReference type="GeneID" id="97455792"/>
<dbReference type="KEGG" id="ypy:YPK_1687"/>
<dbReference type="PATRIC" id="fig|502800.11.peg.2349"/>
<dbReference type="UniPathway" id="UPA00094"/>
<dbReference type="GO" id="GO:0005829">
    <property type="term" value="C:cytosol"/>
    <property type="evidence" value="ECO:0007669"/>
    <property type="project" value="TreeGrafter"/>
</dbReference>
<dbReference type="GO" id="GO:0016020">
    <property type="term" value="C:membrane"/>
    <property type="evidence" value="ECO:0007669"/>
    <property type="project" value="GOC"/>
</dbReference>
<dbReference type="GO" id="GO:0000035">
    <property type="term" value="F:acyl binding"/>
    <property type="evidence" value="ECO:0007669"/>
    <property type="project" value="TreeGrafter"/>
</dbReference>
<dbReference type="GO" id="GO:0000036">
    <property type="term" value="F:acyl carrier activity"/>
    <property type="evidence" value="ECO:0007669"/>
    <property type="project" value="UniProtKB-UniRule"/>
</dbReference>
<dbReference type="GO" id="GO:0009245">
    <property type="term" value="P:lipid A biosynthetic process"/>
    <property type="evidence" value="ECO:0007669"/>
    <property type="project" value="TreeGrafter"/>
</dbReference>
<dbReference type="FunFam" id="1.10.1200.10:FF:000001">
    <property type="entry name" value="Acyl carrier protein"/>
    <property type="match status" value="1"/>
</dbReference>
<dbReference type="Gene3D" id="1.10.1200.10">
    <property type="entry name" value="ACP-like"/>
    <property type="match status" value="1"/>
</dbReference>
<dbReference type="HAMAP" id="MF_01217">
    <property type="entry name" value="Acyl_carrier"/>
    <property type="match status" value="1"/>
</dbReference>
<dbReference type="InterPro" id="IPR003231">
    <property type="entry name" value="ACP"/>
</dbReference>
<dbReference type="InterPro" id="IPR036736">
    <property type="entry name" value="ACP-like_sf"/>
</dbReference>
<dbReference type="InterPro" id="IPR009081">
    <property type="entry name" value="PP-bd_ACP"/>
</dbReference>
<dbReference type="InterPro" id="IPR006162">
    <property type="entry name" value="Ppantetheine_attach_site"/>
</dbReference>
<dbReference type="NCBIfam" id="TIGR00517">
    <property type="entry name" value="acyl_carrier"/>
    <property type="match status" value="1"/>
</dbReference>
<dbReference type="NCBIfam" id="NF002148">
    <property type="entry name" value="PRK00982.1-2"/>
    <property type="match status" value="1"/>
</dbReference>
<dbReference type="NCBIfam" id="NF002149">
    <property type="entry name" value="PRK00982.1-3"/>
    <property type="match status" value="1"/>
</dbReference>
<dbReference type="NCBIfam" id="NF002150">
    <property type="entry name" value="PRK00982.1-4"/>
    <property type="match status" value="1"/>
</dbReference>
<dbReference type="NCBIfam" id="NF002151">
    <property type="entry name" value="PRK00982.1-5"/>
    <property type="match status" value="1"/>
</dbReference>
<dbReference type="PANTHER" id="PTHR20863">
    <property type="entry name" value="ACYL CARRIER PROTEIN"/>
    <property type="match status" value="1"/>
</dbReference>
<dbReference type="PANTHER" id="PTHR20863:SF76">
    <property type="entry name" value="CARRIER DOMAIN-CONTAINING PROTEIN"/>
    <property type="match status" value="1"/>
</dbReference>
<dbReference type="Pfam" id="PF00550">
    <property type="entry name" value="PP-binding"/>
    <property type="match status" value="1"/>
</dbReference>
<dbReference type="SUPFAM" id="SSF47336">
    <property type="entry name" value="ACP-like"/>
    <property type="match status" value="1"/>
</dbReference>
<dbReference type="PROSITE" id="PS50075">
    <property type="entry name" value="CARRIER"/>
    <property type="match status" value="1"/>
</dbReference>
<dbReference type="PROSITE" id="PS00012">
    <property type="entry name" value="PHOSPHOPANTETHEINE"/>
    <property type="match status" value="1"/>
</dbReference>
<feature type="chain" id="PRO_1000139081" description="Acyl carrier protein">
    <location>
        <begin position="1"/>
        <end position="78"/>
    </location>
</feature>
<feature type="domain" description="Carrier" evidence="2">
    <location>
        <begin position="2"/>
        <end position="77"/>
    </location>
</feature>
<feature type="modified residue" description="O-(pantetheine 4'-phosphoryl)serine" evidence="2">
    <location>
        <position position="37"/>
    </location>
</feature>
<sequence>MSTIEERVKKIIVEQLGVKEDEVKNSASFVEDLGADSLDTVELVMALEEEFDTEIPDEEAEKITTVQAAIDFINANQQ</sequence>
<protein>
    <recommendedName>
        <fullName evidence="1">Acyl carrier protein</fullName>
        <shortName evidence="1">ACP</shortName>
    </recommendedName>
</protein>
<comment type="function">
    <text evidence="1">Carrier of the growing fatty acid chain in fatty acid biosynthesis.</text>
</comment>
<comment type="pathway">
    <text evidence="1">Lipid metabolism; fatty acid biosynthesis.</text>
</comment>
<comment type="subcellular location">
    <subcellularLocation>
        <location evidence="1">Cytoplasm</location>
    </subcellularLocation>
</comment>
<comment type="PTM">
    <text evidence="1">4'-phosphopantetheine is transferred from CoA to a specific serine of apo-ACP by AcpS. This modification is essential for activity because fatty acids are bound in thioester linkage to the sulfhydryl of the prosthetic group.</text>
</comment>
<comment type="similarity">
    <text evidence="1">Belongs to the acyl carrier protein (ACP) family.</text>
</comment>
<proteinExistence type="inferred from homology"/>
<evidence type="ECO:0000255" key="1">
    <source>
        <dbReference type="HAMAP-Rule" id="MF_01217"/>
    </source>
</evidence>
<evidence type="ECO:0000255" key="2">
    <source>
        <dbReference type="PROSITE-ProRule" id="PRU00258"/>
    </source>
</evidence>
<keyword id="KW-0963">Cytoplasm</keyword>
<keyword id="KW-0275">Fatty acid biosynthesis</keyword>
<keyword id="KW-0276">Fatty acid metabolism</keyword>
<keyword id="KW-0444">Lipid biosynthesis</keyword>
<keyword id="KW-0443">Lipid metabolism</keyword>
<keyword id="KW-0596">Phosphopantetheine</keyword>
<keyword id="KW-0597">Phosphoprotein</keyword>
<name>ACP_YERPY</name>
<accession>B1JI34</accession>